<gene>
    <name type="primary">GGTA1</name>
</gene>
<comment type="function">
    <text evidence="1">Synthesizes the galactose-alpha(1,3)-galactose group by catalyzing the transfer of a galactose residue, with an alpha-1,3 linkage, on terminal lactosaminide (Gal-beta-1,4-GlcNAc-R) disaccharide borne by a glycoprotein or a glycolipid. Preferentially glycosylates proteins, can synthesize galactose-alpha(1,3)-galactose on glycoproteins but cannot synthesize the glycolipid called isoglobotrihexosylceramide or isogloboside 3 (iGb3) (By similarity).</text>
</comment>
<comment type="catalytic activity">
    <reaction evidence="2">
        <text>a beta-D-galactosyl-(1-&gt;4)-N-acetyl-beta-D-glucosaminyl derivative + UDP-alpha-D-galactose = an alpha-D-galactosyl-(1-&gt;3)-beta-D-galactosyl-(1-&gt;4)-N-acetyl-beta-D-glucosaminyl derivative + UDP + H(+)</text>
        <dbReference type="Rhea" id="RHEA:13013"/>
        <dbReference type="ChEBI" id="CHEBI:15378"/>
        <dbReference type="ChEBI" id="CHEBI:58223"/>
        <dbReference type="ChEBI" id="CHEBI:66914"/>
        <dbReference type="ChEBI" id="CHEBI:133507"/>
        <dbReference type="ChEBI" id="CHEBI:138024"/>
        <dbReference type="EC" id="2.4.1.87"/>
    </reaction>
</comment>
<comment type="cofactor">
    <cofactor evidence="2">
        <name>Mn(2+)</name>
        <dbReference type="ChEBI" id="CHEBI:29035"/>
    </cofactor>
    <text evidence="2">Binds 1 Mn(2+) ion per subunit.</text>
</comment>
<comment type="pathway">
    <text evidence="2">Protein modification; protein glycosylation.</text>
</comment>
<comment type="subcellular location">
    <subcellularLocation>
        <location evidence="1">Golgi apparatus</location>
        <location evidence="1">Golgi stack membrane</location>
        <topology evidence="1">Single-pass type II membrane protein</topology>
    </subcellularLocation>
    <text evidence="1">Membrane-bound form in trans cisternae of Golgi.</text>
</comment>
<comment type="domain">
    <text evidence="1">The conserved DXD motif is involved in cofactor binding. The manganese ion interacts with the beta-phosphate group of UDP and may also have a role in catalysis (By similarity).</text>
</comment>
<comment type="similarity">
    <text evidence="4">Belongs to the glycosyltransferase 6 family.</text>
</comment>
<keyword id="KW-0325">Glycoprotein</keyword>
<keyword id="KW-0328">Glycosyltransferase</keyword>
<keyword id="KW-0333">Golgi apparatus</keyword>
<keyword id="KW-0464">Manganese</keyword>
<keyword id="KW-0472">Membrane</keyword>
<keyword id="KW-0479">Metal-binding</keyword>
<keyword id="KW-1185">Reference proteome</keyword>
<keyword id="KW-0735">Signal-anchor</keyword>
<keyword id="KW-0808">Transferase</keyword>
<keyword id="KW-0812">Transmembrane</keyword>
<keyword id="KW-1133">Transmembrane helix</keyword>
<evidence type="ECO:0000250" key="1"/>
<evidence type="ECO:0000250" key="2">
    <source>
        <dbReference type="UniProtKB" id="P14769"/>
    </source>
</evidence>
<evidence type="ECO:0000255" key="3"/>
<evidence type="ECO:0000305" key="4"/>
<reference key="1">
    <citation type="journal article" date="2002" name="J. Biol. Chem.">
        <title>Molecular basis of evolutionary loss of the alpha 1,3-galactosyltransferase gene in higher primates.</title>
        <authorList>
            <person name="Koike C."/>
            <person name="Fung J.J."/>
            <person name="Geller D.A."/>
            <person name="Kannagi R."/>
            <person name="Libert T."/>
            <person name="Luppi P."/>
            <person name="Nakashima I."/>
            <person name="Profozich J."/>
            <person name="Rudert W."/>
            <person name="Sharma S.B."/>
            <person name="Starzl T.E."/>
            <person name="Trucco M."/>
        </authorList>
    </citation>
    <scope>NUCLEOTIDE SEQUENCE [MRNA]</scope>
</reference>
<accession>Q8SQ20</accession>
<organism>
    <name type="scientific">Callithrix jacchus</name>
    <name type="common">White-tufted-ear marmoset</name>
    <dbReference type="NCBI Taxonomy" id="9483"/>
    <lineage>
        <taxon>Eukaryota</taxon>
        <taxon>Metazoa</taxon>
        <taxon>Chordata</taxon>
        <taxon>Craniata</taxon>
        <taxon>Vertebrata</taxon>
        <taxon>Euteleostomi</taxon>
        <taxon>Mammalia</taxon>
        <taxon>Eutheria</taxon>
        <taxon>Euarchontoglires</taxon>
        <taxon>Primates</taxon>
        <taxon>Haplorrhini</taxon>
        <taxon>Platyrrhini</taxon>
        <taxon>Cebidae</taxon>
        <taxon>Callitrichinae</taxon>
        <taxon>Callithrix</taxon>
        <taxon>Callithrix</taxon>
    </lineage>
</organism>
<dbReference type="EC" id="2.4.1.87" evidence="2"/>
<dbReference type="EMBL" id="AF384428">
    <property type="protein sequence ID" value="AAL93214.1"/>
    <property type="molecule type" value="mRNA"/>
</dbReference>
<dbReference type="RefSeq" id="NP_001254661.1">
    <property type="nucleotide sequence ID" value="NM_001267732.1"/>
</dbReference>
<dbReference type="SMR" id="Q8SQ20"/>
<dbReference type="STRING" id="9483.ENSCJAP00000013178"/>
<dbReference type="CAZy" id="GT6">
    <property type="family name" value="Glycosyltransferase Family 6"/>
</dbReference>
<dbReference type="GlyCosmos" id="Q8SQ20">
    <property type="glycosylation" value="1 site, No reported glycans"/>
</dbReference>
<dbReference type="GeneID" id="100390928"/>
<dbReference type="KEGG" id="cjc:100390928"/>
<dbReference type="CTD" id="2681"/>
<dbReference type="eggNOG" id="ENOG502QW2H">
    <property type="taxonomic scope" value="Eukaryota"/>
</dbReference>
<dbReference type="InParanoid" id="Q8SQ20"/>
<dbReference type="OrthoDB" id="10013941at2759"/>
<dbReference type="BRENDA" id="2.4.1.87">
    <property type="organism ID" value="1068"/>
</dbReference>
<dbReference type="UniPathway" id="UPA00378"/>
<dbReference type="Proteomes" id="UP000008225">
    <property type="component" value="Unplaced"/>
</dbReference>
<dbReference type="GO" id="GO:0031985">
    <property type="term" value="C:Golgi cisterna"/>
    <property type="evidence" value="ECO:0000250"/>
    <property type="project" value="UniProtKB"/>
</dbReference>
<dbReference type="GO" id="GO:0032580">
    <property type="term" value="C:Golgi cisterna membrane"/>
    <property type="evidence" value="ECO:0007669"/>
    <property type="project" value="UniProtKB-SubCell"/>
</dbReference>
<dbReference type="GO" id="GO:0031982">
    <property type="term" value="C:vesicle"/>
    <property type="evidence" value="ECO:0007669"/>
    <property type="project" value="TreeGrafter"/>
</dbReference>
<dbReference type="GO" id="GO:0046872">
    <property type="term" value="F:metal ion binding"/>
    <property type="evidence" value="ECO:0007669"/>
    <property type="project" value="UniProtKB-KW"/>
</dbReference>
<dbReference type="GO" id="GO:0047276">
    <property type="term" value="F:N-acetyllactosaminide 3-alpha-galactosyltransferase activity"/>
    <property type="evidence" value="ECO:0007669"/>
    <property type="project" value="UniProtKB-EC"/>
</dbReference>
<dbReference type="GO" id="GO:0005975">
    <property type="term" value="P:carbohydrate metabolic process"/>
    <property type="evidence" value="ECO:0007669"/>
    <property type="project" value="InterPro"/>
</dbReference>
<dbReference type="GO" id="GO:0030259">
    <property type="term" value="P:lipid glycosylation"/>
    <property type="evidence" value="ECO:0007669"/>
    <property type="project" value="TreeGrafter"/>
</dbReference>
<dbReference type="GO" id="GO:0006486">
    <property type="term" value="P:protein glycosylation"/>
    <property type="evidence" value="ECO:0007669"/>
    <property type="project" value="UniProtKB-UniPathway"/>
</dbReference>
<dbReference type="CDD" id="cd02515">
    <property type="entry name" value="Glyco_transf_6"/>
    <property type="match status" value="1"/>
</dbReference>
<dbReference type="FunFam" id="3.90.550.10:FF:000022">
    <property type="entry name" value="Histo-blood group ABO system transferase"/>
    <property type="match status" value="1"/>
</dbReference>
<dbReference type="Gene3D" id="3.90.550.10">
    <property type="entry name" value="Spore Coat Polysaccharide Biosynthesis Protein SpsA, Chain A"/>
    <property type="match status" value="1"/>
</dbReference>
<dbReference type="InterPro" id="IPR005076">
    <property type="entry name" value="Glyco_trans_6"/>
</dbReference>
<dbReference type="InterPro" id="IPR029044">
    <property type="entry name" value="Nucleotide-diphossugar_trans"/>
</dbReference>
<dbReference type="PANTHER" id="PTHR10462">
    <property type="entry name" value="GLYCOSYLTRANSFERASE-RELATED"/>
    <property type="match status" value="1"/>
</dbReference>
<dbReference type="PANTHER" id="PTHR10462:SF26">
    <property type="entry name" value="N-ACETYLLACTOSAMINIDE ALPHA-1,3-GALACTOSYLTRANSFERASE"/>
    <property type="match status" value="1"/>
</dbReference>
<dbReference type="Pfam" id="PF03414">
    <property type="entry name" value="Glyco_transf_6"/>
    <property type="match status" value="1"/>
</dbReference>
<dbReference type="SUPFAM" id="SSF53448">
    <property type="entry name" value="Nucleotide-diphospho-sugar transferases"/>
    <property type="match status" value="1"/>
</dbReference>
<protein>
    <recommendedName>
        <fullName>N-acetyllactosaminide alpha-1,3-galactosyltransferase</fullName>
        <ecNumber evidence="2">2.4.1.87</ecNumber>
    </recommendedName>
    <alternativeName>
        <fullName>UDP-galactose:beta-D-galactosyl-1,4-N-acetyl-D-glucosaminide alpha-1,3-galactosyltransferase</fullName>
        <shortName>Galactosyltransferase</shortName>
    </alternativeName>
</protein>
<name>GGTA1_CALJA</name>
<sequence length="376" mass="44439">MNVKGKVILSMLVVSTVIVVFWEYINSPEGSFLWIYHSKNPEVDDSSAQKGWWFPGWFNNGIHNYQQEEEDTDKEKGREEEQRKEDDTTELRLWDWFNPKKRPEVVTVTKWKAPVVWEGTYNKAILENYYAKQKITVGLTVFAIGRYIEHYLEEFVTSANRYFMVGHKVIFYVMVDDVSKVPFIELGPLRSFKVFEVKPEKRWQDISMMRMKTIGEHILAHIQHEVDFLFCMDVDQVFQDHFGVETLGQSVAQLQAWWYKADPDDFTYERRKESAAYIPFGQGDFYYHAAIFGGTPIQVLNITQECFKGILLDKKNDIEAEWHDESHLNEYFLLNKPSKILSPEYCWDYHIGLPSDIKTVKLSWQTKEYNLVRNKV</sequence>
<feature type="chain" id="PRO_0000333698" description="N-acetyllactosaminide alpha-1,3-galactosyltransferase">
    <location>
        <begin position="1"/>
        <end position="376"/>
    </location>
</feature>
<feature type="topological domain" description="Cytoplasmic" evidence="3">
    <location>
        <begin position="1"/>
        <end position="6"/>
    </location>
</feature>
<feature type="transmembrane region" description="Helical; Signal-anchor for type II membrane protein" evidence="3">
    <location>
        <begin position="7"/>
        <end position="27"/>
    </location>
</feature>
<feature type="topological domain" description="Lumenal" evidence="3">
    <location>
        <begin position="28"/>
        <end position="376"/>
    </location>
</feature>
<feature type="active site" description="Nucleophile" evidence="2">
    <location>
        <position position="325"/>
    </location>
</feature>
<feature type="binding site" evidence="2">
    <location>
        <begin position="142"/>
        <end position="147"/>
    </location>
    <ligand>
        <name>substrate</name>
    </ligand>
</feature>
<feature type="binding site" evidence="2">
    <location>
        <begin position="233"/>
        <end position="235"/>
    </location>
    <ligand>
        <name>substrate</name>
    </ligand>
</feature>
<feature type="binding site" evidence="2">
    <location>
        <position position="233"/>
    </location>
    <ligand>
        <name>Mn(2+)</name>
        <dbReference type="ChEBI" id="CHEBI:29035"/>
    </ligand>
</feature>
<feature type="binding site" evidence="2">
    <location>
        <position position="235"/>
    </location>
    <ligand>
        <name>Mn(2+)</name>
        <dbReference type="ChEBI" id="CHEBI:29035"/>
    </ligand>
</feature>
<feature type="binding site" evidence="2">
    <location>
        <begin position="255"/>
        <end position="258"/>
    </location>
    <ligand>
        <name>substrate</name>
    </ligand>
</feature>
<feature type="binding site" evidence="2">
    <location>
        <position position="267"/>
    </location>
    <ligand>
        <name>substrate</name>
    </ligand>
</feature>
<feature type="binding site" evidence="2">
    <location>
        <begin position="367"/>
        <end position="373"/>
    </location>
    <ligand>
        <name>substrate</name>
    </ligand>
</feature>
<feature type="glycosylation site" description="N-linked (GlcNAc...) asparagine" evidence="3">
    <location>
        <position position="301"/>
    </location>
</feature>
<proteinExistence type="evidence at transcript level"/>